<dbReference type="EC" id="3.1.3.-"/>
<dbReference type="EMBL" id="CP000247">
    <property type="protein sequence ID" value="ABG69827.1"/>
    <property type="molecule type" value="Genomic_DNA"/>
</dbReference>
<dbReference type="RefSeq" id="WP_000983609.1">
    <property type="nucleotide sequence ID" value="NC_008253.1"/>
</dbReference>
<dbReference type="SMR" id="Q0TGV2"/>
<dbReference type="GeneID" id="75171954"/>
<dbReference type="KEGG" id="ecp:ECP_1826"/>
<dbReference type="HOGENOM" id="CLU_080718_1_0_6"/>
<dbReference type="Proteomes" id="UP000009182">
    <property type="component" value="Chromosome"/>
</dbReference>
<dbReference type="GO" id="GO:0009288">
    <property type="term" value="C:bacterial-type flagellum"/>
    <property type="evidence" value="ECO:0007669"/>
    <property type="project" value="InterPro"/>
</dbReference>
<dbReference type="GO" id="GO:0005737">
    <property type="term" value="C:cytoplasm"/>
    <property type="evidence" value="ECO:0007669"/>
    <property type="project" value="UniProtKB-SubCell"/>
</dbReference>
<dbReference type="GO" id="GO:0004721">
    <property type="term" value="F:phosphoprotein phosphatase activity"/>
    <property type="evidence" value="ECO:0007669"/>
    <property type="project" value="UniProtKB-KW"/>
</dbReference>
<dbReference type="GO" id="GO:0097588">
    <property type="term" value="P:archaeal or bacterial-type flagellum-dependent cell motility"/>
    <property type="evidence" value="ECO:0007669"/>
    <property type="project" value="UniProtKB-KW"/>
</dbReference>
<dbReference type="GO" id="GO:0006935">
    <property type="term" value="P:chemotaxis"/>
    <property type="evidence" value="ECO:0007669"/>
    <property type="project" value="UniProtKB-KW"/>
</dbReference>
<dbReference type="GO" id="GO:0050920">
    <property type="term" value="P:regulation of chemotaxis"/>
    <property type="evidence" value="ECO:0007669"/>
    <property type="project" value="InterPro"/>
</dbReference>
<dbReference type="FunFam" id="1.10.287.500:FF:000001">
    <property type="entry name" value="Protein phosphatase CheZ"/>
    <property type="match status" value="1"/>
</dbReference>
<dbReference type="Gene3D" id="1.10.287.500">
    <property type="entry name" value="Helix hairpin bin"/>
    <property type="match status" value="1"/>
</dbReference>
<dbReference type="Gene3D" id="1.20.5.590">
    <property type="entry name" value="Single helix bin"/>
    <property type="match status" value="1"/>
</dbReference>
<dbReference type="InterPro" id="IPR007439">
    <property type="entry name" value="Chemotax_Pase_CheZ"/>
</dbReference>
<dbReference type="InterPro" id="IPR050992">
    <property type="entry name" value="CheZ_family_phosphatases"/>
</dbReference>
<dbReference type="NCBIfam" id="NF008368">
    <property type="entry name" value="PRK11166.1"/>
    <property type="match status" value="1"/>
</dbReference>
<dbReference type="PANTHER" id="PTHR43693">
    <property type="entry name" value="PROTEIN PHOSPHATASE CHEZ"/>
    <property type="match status" value="1"/>
</dbReference>
<dbReference type="PANTHER" id="PTHR43693:SF1">
    <property type="entry name" value="PROTEIN PHOSPHATASE CHEZ"/>
    <property type="match status" value="1"/>
</dbReference>
<dbReference type="Pfam" id="PF04344">
    <property type="entry name" value="CheZ"/>
    <property type="match status" value="1"/>
</dbReference>
<dbReference type="PIRSF" id="PIRSF002884">
    <property type="entry name" value="CheZ"/>
    <property type="match status" value="1"/>
</dbReference>
<dbReference type="SUPFAM" id="SSF75708">
    <property type="entry name" value="Chemotaxis phosphatase CheZ"/>
    <property type="match status" value="1"/>
</dbReference>
<gene>
    <name type="primary">cheZ</name>
    <name type="ordered locus">ECP_1826</name>
</gene>
<feature type="chain" id="PRO_0000410778" description="Protein phosphatase CheZ">
    <location>
        <begin position="1"/>
        <end position="214"/>
    </location>
</feature>
<feature type="region of interest" description="Disordered" evidence="2">
    <location>
        <begin position="174"/>
        <end position="199"/>
    </location>
</feature>
<feature type="compositionally biased region" description="Polar residues" evidence="2">
    <location>
        <begin position="183"/>
        <end position="193"/>
    </location>
</feature>
<feature type="site" description="Enhances dephosphorylation of CheY-P" evidence="1">
    <location>
        <position position="147"/>
    </location>
</feature>
<proteinExistence type="inferred from homology"/>
<accession>Q0TGV2</accession>
<name>CHEZ_ECOL5</name>
<comment type="function">
    <text evidence="1">Plays an important role in bacterial chemotaxis signal transduction pathway by accelerating the dephosphorylation of phosphorylated CheY (CheY-P).</text>
</comment>
<comment type="subunit">
    <text evidence="1">Homodimer.</text>
</comment>
<comment type="subcellular location">
    <subcellularLocation>
        <location evidence="1">Cytoplasm</location>
    </subcellularLocation>
</comment>
<comment type="similarity">
    <text evidence="3">Belongs to the CheZ family.</text>
</comment>
<sequence>MMQPSIKPADEHSAGDIIARIGSLTRMLRDSLRELGLDQAIAEAAEAIPDARDRLYYVVQMTAQAAERALNSVEASQPHQDQMEKSAKALTQRWDDWFADPIDLADARELVTDTRQFLADVPAHTSFTNAQLLEIMMAQDFQDLTGQVIKRMMDVIQEIERQLLMVLLENIPEQESRPKRENQSLLNGPQVDTSKAGVVASQDQVDDLLDSLGF</sequence>
<organism>
    <name type="scientific">Escherichia coli O6:K15:H31 (strain 536 / UPEC)</name>
    <dbReference type="NCBI Taxonomy" id="362663"/>
    <lineage>
        <taxon>Bacteria</taxon>
        <taxon>Pseudomonadati</taxon>
        <taxon>Pseudomonadota</taxon>
        <taxon>Gammaproteobacteria</taxon>
        <taxon>Enterobacterales</taxon>
        <taxon>Enterobacteriaceae</taxon>
        <taxon>Escherichia</taxon>
    </lineage>
</organism>
<protein>
    <recommendedName>
        <fullName>Protein phosphatase CheZ</fullName>
        <ecNumber>3.1.3.-</ecNumber>
    </recommendedName>
    <alternativeName>
        <fullName>Chemotaxis protein CheZ</fullName>
    </alternativeName>
</protein>
<reference key="1">
    <citation type="journal article" date="2006" name="Mol. Microbiol.">
        <title>Role of pathogenicity island-associated integrases in the genome plasticity of uropathogenic Escherichia coli strain 536.</title>
        <authorList>
            <person name="Hochhut B."/>
            <person name="Wilde C."/>
            <person name="Balling G."/>
            <person name="Middendorf B."/>
            <person name="Dobrindt U."/>
            <person name="Brzuszkiewicz E."/>
            <person name="Gottschalk G."/>
            <person name="Carniel E."/>
            <person name="Hacker J."/>
        </authorList>
    </citation>
    <scope>NUCLEOTIDE SEQUENCE [LARGE SCALE GENOMIC DNA]</scope>
    <source>
        <strain>536 / UPEC</strain>
    </source>
</reference>
<evidence type="ECO:0000250" key="1"/>
<evidence type="ECO:0000256" key="2">
    <source>
        <dbReference type="SAM" id="MobiDB-lite"/>
    </source>
</evidence>
<evidence type="ECO:0000305" key="3"/>
<keyword id="KW-0145">Chemotaxis</keyword>
<keyword id="KW-0963">Cytoplasm</keyword>
<keyword id="KW-0283">Flagellar rotation</keyword>
<keyword id="KW-0378">Hydrolase</keyword>
<keyword id="KW-0904">Protein phosphatase</keyword>